<name>RL27_PASMU</name>
<reference key="1">
    <citation type="journal article" date="2001" name="Proc. Natl. Acad. Sci. U.S.A.">
        <title>Complete genomic sequence of Pasteurella multocida Pm70.</title>
        <authorList>
            <person name="May B.J."/>
            <person name="Zhang Q."/>
            <person name="Li L.L."/>
            <person name="Paustian M.L."/>
            <person name="Whittam T.S."/>
            <person name="Kapur V."/>
        </authorList>
    </citation>
    <scope>NUCLEOTIDE SEQUENCE [LARGE SCALE GENOMIC DNA]</scope>
    <source>
        <strain>Pm70</strain>
    </source>
</reference>
<comment type="similarity">
    <text evidence="1">Belongs to the bacterial ribosomal protein bL27 family.</text>
</comment>
<proteinExistence type="inferred from homology"/>
<sequence>MATKKAGGSTRNGRDSEAKRLGVKRFGGESVLAGSIIVRQRGTKFHAGSNVGMGRDHTLFATADGKVKFEVKGEKNRKYVSIIAE</sequence>
<gene>
    <name evidence="1" type="primary">rpmA</name>
    <name evidence="1" type="synonym">rpl27</name>
    <name type="ordered locus">PM0348</name>
</gene>
<keyword id="KW-1185">Reference proteome</keyword>
<keyword id="KW-0687">Ribonucleoprotein</keyword>
<keyword id="KW-0689">Ribosomal protein</keyword>
<feature type="chain" id="PRO_0000181139" description="Large ribosomal subunit protein bL27">
    <location>
        <begin position="1"/>
        <end position="85"/>
    </location>
</feature>
<feature type="region of interest" description="Disordered" evidence="2">
    <location>
        <begin position="1"/>
        <end position="20"/>
    </location>
</feature>
<evidence type="ECO:0000255" key="1">
    <source>
        <dbReference type="HAMAP-Rule" id="MF_00539"/>
    </source>
</evidence>
<evidence type="ECO:0000256" key="2">
    <source>
        <dbReference type="SAM" id="MobiDB-lite"/>
    </source>
</evidence>
<evidence type="ECO:0000305" key="3"/>
<protein>
    <recommendedName>
        <fullName evidence="1">Large ribosomal subunit protein bL27</fullName>
    </recommendedName>
    <alternativeName>
        <fullName evidence="3">50S ribosomal protein L27</fullName>
    </alternativeName>
</protein>
<dbReference type="EMBL" id="AE004439">
    <property type="protein sequence ID" value="AAK02432.1"/>
    <property type="molecule type" value="Genomic_DNA"/>
</dbReference>
<dbReference type="RefSeq" id="WP_005721506.1">
    <property type="nucleotide sequence ID" value="NC_002663.1"/>
</dbReference>
<dbReference type="SMR" id="Q9CNS7"/>
<dbReference type="STRING" id="272843.PM0348"/>
<dbReference type="EnsemblBacteria" id="AAK02432">
    <property type="protein sequence ID" value="AAK02432"/>
    <property type="gene ID" value="PM0348"/>
</dbReference>
<dbReference type="GeneID" id="77206165"/>
<dbReference type="KEGG" id="pmu:PM0348"/>
<dbReference type="HOGENOM" id="CLU_095424_4_1_6"/>
<dbReference type="OrthoDB" id="9803474at2"/>
<dbReference type="Proteomes" id="UP000000809">
    <property type="component" value="Chromosome"/>
</dbReference>
<dbReference type="GO" id="GO:0022625">
    <property type="term" value="C:cytosolic large ribosomal subunit"/>
    <property type="evidence" value="ECO:0007669"/>
    <property type="project" value="TreeGrafter"/>
</dbReference>
<dbReference type="GO" id="GO:0003735">
    <property type="term" value="F:structural constituent of ribosome"/>
    <property type="evidence" value="ECO:0007669"/>
    <property type="project" value="InterPro"/>
</dbReference>
<dbReference type="GO" id="GO:0006412">
    <property type="term" value="P:translation"/>
    <property type="evidence" value="ECO:0007669"/>
    <property type="project" value="UniProtKB-UniRule"/>
</dbReference>
<dbReference type="FunFam" id="2.40.50.100:FF:000001">
    <property type="entry name" value="50S ribosomal protein L27"/>
    <property type="match status" value="1"/>
</dbReference>
<dbReference type="Gene3D" id="2.40.50.100">
    <property type="match status" value="1"/>
</dbReference>
<dbReference type="HAMAP" id="MF_00539">
    <property type="entry name" value="Ribosomal_bL27"/>
    <property type="match status" value="1"/>
</dbReference>
<dbReference type="InterPro" id="IPR001684">
    <property type="entry name" value="Ribosomal_bL27"/>
</dbReference>
<dbReference type="InterPro" id="IPR018261">
    <property type="entry name" value="Ribosomal_bL27_CS"/>
</dbReference>
<dbReference type="NCBIfam" id="TIGR00062">
    <property type="entry name" value="L27"/>
    <property type="match status" value="1"/>
</dbReference>
<dbReference type="PANTHER" id="PTHR15893:SF0">
    <property type="entry name" value="LARGE RIBOSOMAL SUBUNIT PROTEIN BL27M"/>
    <property type="match status" value="1"/>
</dbReference>
<dbReference type="PANTHER" id="PTHR15893">
    <property type="entry name" value="RIBOSOMAL PROTEIN L27"/>
    <property type="match status" value="1"/>
</dbReference>
<dbReference type="Pfam" id="PF01016">
    <property type="entry name" value="Ribosomal_L27"/>
    <property type="match status" value="1"/>
</dbReference>
<dbReference type="PRINTS" id="PR00063">
    <property type="entry name" value="RIBOSOMALL27"/>
</dbReference>
<dbReference type="SUPFAM" id="SSF110324">
    <property type="entry name" value="Ribosomal L27 protein-like"/>
    <property type="match status" value="1"/>
</dbReference>
<dbReference type="PROSITE" id="PS00831">
    <property type="entry name" value="RIBOSOMAL_L27"/>
    <property type="match status" value="1"/>
</dbReference>
<organism>
    <name type="scientific">Pasteurella multocida (strain Pm70)</name>
    <dbReference type="NCBI Taxonomy" id="272843"/>
    <lineage>
        <taxon>Bacteria</taxon>
        <taxon>Pseudomonadati</taxon>
        <taxon>Pseudomonadota</taxon>
        <taxon>Gammaproteobacteria</taxon>
        <taxon>Pasteurellales</taxon>
        <taxon>Pasteurellaceae</taxon>
        <taxon>Pasteurella</taxon>
    </lineage>
</organism>
<accession>Q9CNS7</accession>